<organism>
    <name type="scientific">Ranoidea gracilenta</name>
    <name type="common">Dainty green tree frog</name>
    <name type="synonym">Litoria gracilenta</name>
    <dbReference type="NCBI Taxonomy" id="95133"/>
    <lineage>
        <taxon>Eukaryota</taxon>
        <taxon>Metazoa</taxon>
        <taxon>Chordata</taxon>
        <taxon>Craniata</taxon>
        <taxon>Vertebrata</taxon>
        <taxon>Euteleostomi</taxon>
        <taxon>Amphibia</taxon>
        <taxon>Batrachia</taxon>
        <taxon>Anura</taxon>
        <taxon>Neobatrachia</taxon>
        <taxon>Hyloidea</taxon>
        <taxon>Hylidae</taxon>
        <taxon>Pelodryadinae</taxon>
        <taxon>Ranoidea</taxon>
    </lineage>
</organism>
<protein>
    <recommendedName>
        <fullName>Caerin-3.5</fullName>
    </recommendedName>
</protein>
<evidence type="ECO:0000269" key="1">
    <source>
    </source>
</evidence>
<evidence type="ECO:0000305" key="2"/>
<keyword id="KW-0027">Amidation</keyword>
<keyword id="KW-0878">Amphibian defense peptide</keyword>
<keyword id="KW-0044">Antibiotic</keyword>
<keyword id="KW-0929">Antimicrobial</keyword>
<keyword id="KW-0903">Direct protein sequencing</keyword>
<keyword id="KW-0964">Secreted</keyword>
<proteinExistence type="evidence at protein level"/>
<reference key="1">
    <citation type="journal article" date="2006" name="Toxicon">
        <title>New caerin antibiotic peptides from the skin secretion of the dainty green tree frog Litoria gracilenta. Identification using positive and negative ion electrospray mass spectrometry.</title>
        <authorList>
            <person name="Maclean M.J."/>
            <person name="Brinkworth C.S."/>
            <person name="Bilusich D."/>
            <person name="Bowie J.H."/>
            <person name="Doyle J.R."/>
            <person name="Llewellyn L.E."/>
            <person name="Tyler M.J."/>
        </authorList>
    </citation>
    <scope>PROTEIN SEQUENCE</scope>
    <scope>FUNCTION</scope>
    <scope>AMIDATION AT LYS-22</scope>
    <scope>MASS SPECTROMETRY</scope>
    <scope>SYNTHESIS</scope>
    <source>
        <tissue>Skin secretion</tissue>
    </source>
</reference>
<feature type="peptide" id="PRO_0000271474" description="Caerin-3.5">
    <location>
        <begin position="1"/>
        <end position="22"/>
    </location>
</feature>
<feature type="modified residue" description="Lysine amide" evidence="1">
    <location>
        <position position="22"/>
    </location>
</feature>
<comment type="function">
    <text evidence="1">Shows significant activity against Gram-positive organisms, but is less effective against Gram-negative organisms.</text>
</comment>
<comment type="subcellular location">
    <subcellularLocation>
        <location>Secreted</location>
    </subcellularLocation>
</comment>
<comment type="tissue specificity">
    <text>Expressed by the skin dorsal glands.</text>
</comment>
<comment type="mass spectrometry"/>
<comment type="similarity">
    <text evidence="2">Belongs to the frog skin active peptide (FSAP) family. Caerin subfamily.</text>
</comment>
<name>CR35_RANGR</name>
<accession>P0C2A9</accession>
<sequence>GLWEKVKEKANELVSGIVEGVK</sequence>
<dbReference type="GO" id="GO:0005576">
    <property type="term" value="C:extracellular region"/>
    <property type="evidence" value="ECO:0007669"/>
    <property type="project" value="UniProtKB-SubCell"/>
</dbReference>
<dbReference type="GO" id="GO:0042742">
    <property type="term" value="P:defense response to bacterium"/>
    <property type="evidence" value="ECO:0007669"/>
    <property type="project" value="UniProtKB-KW"/>
</dbReference>